<protein>
    <recommendedName>
        <fullName evidence="1">Intermediate capsid protein VP6</fullName>
    </recommendedName>
</protein>
<dbReference type="EMBL" id="AF317123">
    <property type="protein sequence ID" value="AAK60604.1"/>
    <property type="molecule type" value="mRNA"/>
</dbReference>
<dbReference type="SMR" id="Q91N61"/>
<dbReference type="GO" id="GO:0019031">
    <property type="term" value="C:viral envelope"/>
    <property type="evidence" value="ECO:0007669"/>
    <property type="project" value="UniProtKB-UniRule"/>
</dbReference>
<dbReference type="GO" id="GO:0039626">
    <property type="term" value="C:viral intermediate capsid"/>
    <property type="evidence" value="ECO:0007669"/>
    <property type="project" value="UniProtKB-UniRule"/>
</dbReference>
<dbReference type="GO" id="GO:0046789">
    <property type="term" value="F:host cell surface receptor binding"/>
    <property type="evidence" value="ECO:0007669"/>
    <property type="project" value="UniProtKB-UniRule"/>
</dbReference>
<dbReference type="GO" id="GO:0046872">
    <property type="term" value="F:metal ion binding"/>
    <property type="evidence" value="ECO:0007669"/>
    <property type="project" value="UniProtKB-UniRule"/>
</dbReference>
<dbReference type="GO" id="GO:0005198">
    <property type="term" value="F:structural molecule activity"/>
    <property type="evidence" value="ECO:0007669"/>
    <property type="project" value="UniProtKB-UniRule"/>
</dbReference>
<dbReference type="GO" id="GO:0019064">
    <property type="term" value="P:fusion of virus membrane with host plasma membrane"/>
    <property type="evidence" value="ECO:0007669"/>
    <property type="project" value="UniProtKB-UniRule"/>
</dbReference>
<dbReference type="Gene3D" id="2.60.120.170">
    <property type="match status" value="1"/>
</dbReference>
<dbReference type="Gene3D" id="1.10.1350.10">
    <property type="entry name" value="Viral capsid alpha domain"/>
    <property type="match status" value="1"/>
</dbReference>
<dbReference type="HAMAP" id="MF_04126">
    <property type="entry name" value="Rota_VP6"/>
    <property type="match status" value="1"/>
</dbReference>
<dbReference type="HAMAP" id="MF_04129">
    <property type="entry name" value="Rota_VP6_A"/>
    <property type="match status" value="1"/>
</dbReference>
<dbReference type="InterPro" id="IPR008980">
    <property type="entry name" value="Capsid_hemagglutn"/>
</dbReference>
<dbReference type="InterPro" id="IPR001385">
    <property type="entry name" value="Rotavirus_A/C_VP6"/>
</dbReference>
<dbReference type="InterPro" id="IPR008935">
    <property type="entry name" value="Virus_capsid_a-hlx_vir"/>
</dbReference>
<dbReference type="Pfam" id="PF00980">
    <property type="entry name" value="Rota_Capsid_VP6"/>
    <property type="match status" value="1"/>
</dbReference>
<dbReference type="SUPFAM" id="SSF48345">
    <property type="entry name" value="A virus capsid protein alpha-helical domain"/>
    <property type="match status" value="1"/>
</dbReference>
<dbReference type="SUPFAM" id="SSF49818">
    <property type="entry name" value="Viral protein domain"/>
    <property type="match status" value="1"/>
</dbReference>
<organism>
    <name type="scientific">Rotavirus A (strain RVA/Pig/United States/OSU/1977/G5P9[7])</name>
    <name type="common">RV-A</name>
    <name type="synonym">Rotavirus A (strain Ohio State University)</name>
    <dbReference type="NCBI Taxonomy" id="10915"/>
    <lineage>
        <taxon>Viruses</taxon>
        <taxon>Riboviria</taxon>
        <taxon>Orthornavirae</taxon>
        <taxon>Duplornaviricota</taxon>
        <taxon>Resentoviricetes</taxon>
        <taxon>Reovirales</taxon>
        <taxon>Sedoreoviridae</taxon>
        <taxon>Rotavirus</taxon>
        <taxon>Rotavirus A</taxon>
    </lineage>
</organism>
<feature type="chain" id="PRO_0000368183" description="Intermediate capsid protein VP6">
    <location>
        <begin position="1"/>
        <end position="397"/>
    </location>
</feature>
<feature type="region of interest" description="Interaction with the inner capsid protein VP2" evidence="1">
    <location>
        <begin position="62"/>
        <end position="73"/>
    </location>
</feature>
<feature type="binding site" evidence="1">
    <location>
        <position position="153"/>
    </location>
    <ligand>
        <name>Zn(2+)</name>
        <dbReference type="ChEBI" id="CHEBI:29105"/>
        <note>ligand shared between all trimeric partners</note>
    </ligand>
</feature>
<feature type="binding site" evidence="1">
    <location>
        <position position="266"/>
    </location>
    <ligand>
        <name>Ca(2+)</name>
        <dbReference type="ChEBI" id="CHEBI:29108"/>
    </ligand>
</feature>
<feature type="binding site" evidence="1">
    <location>
        <position position="286"/>
    </location>
    <ligand>
        <name>Ca(2+)</name>
        <dbReference type="ChEBI" id="CHEBI:29108"/>
    </ligand>
</feature>
<name>VP6_ROTP5</name>
<accession>Q91N61</accession>
<reference key="1">
    <citation type="submission" date="2000-10" db="EMBL/GenBank/DDBJ databases">
        <title>Antigenic and molecular analysis of group A porcine and bovine rotaviruses isolated in the United States, Venezuela, and South Africa.</title>
        <authorList>
            <person name="Ciarlet M."/>
            <person name="Steele A.D."/>
            <person name="Vasquez E."/>
            <person name="Bertolotti-Ciarlet A."/>
            <person name="Sanchez-Camacho A."/>
            <person name="Pina C.I."/>
            <person name="Pujol F.H."/>
            <person name="Liprandi F."/>
        </authorList>
    </citation>
    <scope>NUCLEOTIDE SEQUENCE [MRNA]</scope>
</reference>
<reference key="2">
    <citation type="journal article" date="2013" name="J. Virol.">
        <title>Rotavirus viroplasm proteins interact with the cellular SUMOylation system: implications for viroplasm-like structure formation.</title>
        <authorList>
            <person name="Campagna M."/>
            <person name="Marcos-Villar L."/>
            <person name="Arnoldi F."/>
            <person name="de la Cruz-Herrera C.F."/>
            <person name="Gallego P."/>
            <person name="Gonzalez-Santamaria J."/>
            <person name="Gonzalez D."/>
            <person name="Lopitz-Otsoa F."/>
            <person name="Rodriguez M.S."/>
            <person name="Burrone O.R."/>
            <person name="Rivas C."/>
        </authorList>
    </citation>
    <scope>SUMOYLATION</scope>
</reference>
<comment type="function">
    <text evidence="1">Intermediate capsid protein that self assembles to form an icosahedral capsid with a T=13 symmetry, which consists of 230 trimers of VP6, with channels at each of its five-fold vertices. This capsid constitutes the middle concentric layer of the viral mature particle. The innermost VP2 capsid and the intermediate VP6 capsid remain intact following cell entry to protect the dsRNA from degradation and to prevent unfavorable antiviral responses in the host cell during all the replication cycle of the virus. Nascent transcripts are transcribed within the structural confines of this double-layered particle (DLP) and are extruded through the channels at the five-fold axes. VP6 is required for the transcription activity of the DLP.</text>
</comment>
<comment type="subunit">
    <text evidence="1">Homotrimer. Interacts with the inner capsid protein VP2. Interacts with the outer capsid glycoprotein VP7. Interacts with the outer capsid protein VP5*.</text>
</comment>
<comment type="subcellular location">
    <subcellularLocation>
        <location evidence="1">Virion</location>
    </subcellularLocation>
    <text evidence="1">Component of the intermediate capsid. Also found in spherical cytoplasmic structures, called virus factories, that appear early after infection and are the site of viral replication and packaging.</text>
</comment>
<comment type="PTM">
    <text evidence="1">The N-terminus is blocked.</text>
</comment>
<comment type="PTM">
    <text evidence="1 2">Sumoylated with SUMO1 and SUMO2. Sumoylation of viral proteins seems to have a positive role on viral replication.</text>
</comment>
<comment type="miscellaneous">
    <text evidence="1">The VP6 trimer contains a zinc ion located at the center of the molecule. The zinc ion is not essential for either trimerization or transcription activity of the DLP. Zinc-depleted VP6 has an increased sensitivity to proteases.</text>
</comment>
<comment type="similarity">
    <text evidence="1">Belongs to the rotavirus VP6 family.</text>
</comment>
<sequence length="397" mass="44756">MEVLYSLSKTLKDARDKIVEGTLYSNVSDLIQQFNQMIVTMNGNEFQTGGIGNLPIRNWTFDFGLLGTTLLNLDANYVENARTTIEYFIDFIDNVCMDEIARESQRNGIAPQSEALRKLSGIKFKRINFDNSSDYIENWNLQNRRQRTGFVFHKPNILPYSASFTLNRSQPAHDNLMGTMWINAGSEIQVAGFDYSCALNAPANIQQFEHVVPLRRALTTATITLLPDAERFSFPRVINSADGTTTWYFNPVILRPSNVEVEFLLNGQIINTYQARFGTIIARNFDTIRLSFQLVRPPNMTPAVANLFPQAPPFIFHATVGLTLRIESAVCESVLADASETLLANVTSVRQEYAIPVGPVFPPGMNWTELITNYSPSREDNLQRVFTVASIRSMLIK</sequence>
<proteinExistence type="evidence at protein level"/>
<organismHost>
    <name type="scientific">Sus scrofa</name>
    <name type="common">Pig</name>
    <dbReference type="NCBI Taxonomy" id="9823"/>
</organismHost>
<evidence type="ECO:0000255" key="1">
    <source>
        <dbReference type="HAMAP-Rule" id="MF_04129"/>
    </source>
</evidence>
<evidence type="ECO:0000269" key="2">
    <source>
    </source>
</evidence>
<keyword id="KW-0106">Calcium</keyword>
<keyword id="KW-0167">Capsid protein</keyword>
<keyword id="KW-1154">Intermediate capsid protein</keyword>
<keyword id="KW-0479">Metal-binding</keyword>
<keyword id="KW-0832">Ubl conjugation</keyword>
<keyword id="KW-0946">Virion</keyword>
<keyword id="KW-0862">Zinc</keyword>